<accession>C0RJI5</accession>
<sequence>MASPKETLQRRAARVRRQVKAVANGRPRLSVHRSSKNIYAQIIDDVRGVTLAAASTLDGDLKGKLKTGADSAAAAAVGKLVAERAVKAGVKDVVFDRGAFIYHGRVKALAEAAREGGLSF</sequence>
<reference key="1">
    <citation type="submission" date="2009-03" db="EMBL/GenBank/DDBJ databases">
        <title>Brucella melitensis ATCC 23457 whole genome shotgun sequencing project.</title>
        <authorList>
            <person name="Setubal J.C."/>
            <person name="Boyle S."/>
            <person name="Crasta O.R."/>
            <person name="Gillespie J.J."/>
            <person name="Kenyon R.W."/>
            <person name="Lu J."/>
            <person name="Mane S."/>
            <person name="Nagrani S."/>
            <person name="Shallom J.M."/>
            <person name="Shallom S."/>
            <person name="Shukla M."/>
            <person name="Snyder E.E."/>
            <person name="Sobral B.W."/>
            <person name="Wattam A.R."/>
            <person name="Will R."/>
            <person name="Williams K."/>
            <person name="Yoo H."/>
            <person name="Munk C."/>
            <person name="Tapia R."/>
            <person name="Han C."/>
            <person name="Detter J.C."/>
            <person name="Bruce D."/>
            <person name="Brettin T.S."/>
        </authorList>
    </citation>
    <scope>NUCLEOTIDE SEQUENCE [LARGE SCALE GENOMIC DNA]</scope>
    <source>
        <strain>ATCC 23457</strain>
    </source>
</reference>
<keyword id="KW-0687">Ribonucleoprotein</keyword>
<keyword id="KW-0689">Ribosomal protein</keyword>
<keyword id="KW-0694">RNA-binding</keyword>
<keyword id="KW-0699">rRNA-binding</keyword>
<comment type="function">
    <text evidence="1">This is one of the proteins that bind and probably mediate the attachment of the 5S RNA into the large ribosomal subunit, where it forms part of the central protuberance.</text>
</comment>
<comment type="subunit">
    <text evidence="1">Part of the 50S ribosomal subunit; part of the 5S rRNA/L5/L18/L25 subcomplex. Contacts the 5S and 23S rRNAs.</text>
</comment>
<comment type="similarity">
    <text evidence="1">Belongs to the universal ribosomal protein uL18 family.</text>
</comment>
<organism>
    <name type="scientific">Brucella melitensis biotype 2 (strain ATCC 23457)</name>
    <dbReference type="NCBI Taxonomy" id="546272"/>
    <lineage>
        <taxon>Bacteria</taxon>
        <taxon>Pseudomonadati</taxon>
        <taxon>Pseudomonadota</taxon>
        <taxon>Alphaproteobacteria</taxon>
        <taxon>Hyphomicrobiales</taxon>
        <taxon>Brucellaceae</taxon>
        <taxon>Brucella/Ochrobactrum group</taxon>
        <taxon>Brucella</taxon>
    </lineage>
</organism>
<protein>
    <recommendedName>
        <fullName evidence="1">Large ribosomal subunit protein uL18</fullName>
    </recommendedName>
    <alternativeName>
        <fullName evidence="2">50S ribosomal protein L18</fullName>
    </alternativeName>
</protein>
<dbReference type="EMBL" id="CP001488">
    <property type="protein sequence ID" value="ACO00993.1"/>
    <property type="molecule type" value="Genomic_DNA"/>
</dbReference>
<dbReference type="RefSeq" id="WP_002964346.1">
    <property type="nucleotide sequence ID" value="NC_012441.1"/>
</dbReference>
<dbReference type="SMR" id="C0RJI5"/>
<dbReference type="GeneID" id="97533540"/>
<dbReference type="KEGG" id="bmi:BMEA_A1262"/>
<dbReference type="HOGENOM" id="CLU_098841_0_1_5"/>
<dbReference type="Proteomes" id="UP000001748">
    <property type="component" value="Chromosome I"/>
</dbReference>
<dbReference type="GO" id="GO:0022625">
    <property type="term" value="C:cytosolic large ribosomal subunit"/>
    <property type="evidence" value="ECO:0007669"/>
    <property type="project" value="TreeGrafter"/>
</dbReference>
<dbReference type="GO" id="GO:0008097">
    <property type="term" value="F:5S rRNA binding"/>
    <property type="evidence" value="ECO:0007669"/>
    <property type="project" value="TreeGrafter"/>
</dbReference>
<dbReference type="GO" id="GO:0003735">
    <property type="term" value="F:structural constituent of ribosome"/>
    <property type="evidence" value="ECO:0007669"/>
    <property type="project" value="InterPro"/>
</dbReference>
<dbReference type="GO" id="GO:0006412">
    <property type="term" value="P:translation"/>
    <property type="evidence" value="ECO:0007669"/>
    <property type="project" value="UniProtKB-UniRule"/>
</dbReference>
<dbReference type="CDD" id="cd00432">
    <property type="entry name" value="Ribosomal_L18_L5e"/>
    <property type="match status" value="1"/>
</dbReference>
<dbReference type="FunFam" id="3.30.420.100:FF:000001">
    <property type="entry name" value="50S ribosomal protein L18"/>
    <property type="match status" value="1"/>
</dbReference>
<dbReference type="Gene3D" id="3.30.420.100">
    <property type="match status" value="1"/>
</dbReference>
<dbReference type="HAMAP" id="MF_01337_B">
    <property type="entry name" value="Ribosomal_uL18_B"/>
    <property type="match status" value="1"/>
</dbReference>
<dbReference type="InterPro" id="IPR004389">
    <property type="entry name" value="Ribosomal_uL18_bac-type"/>
</dbReference>
<dbReference type="InterPro" id="IPR005484">
    <property type="entry name" value="Ribosomal_uL18_bac/euk"/>
</dbReference>
<dbReference type="NCBIfam" id="TIGR00060">
    <property type="entry name" value="L18_bact"/>
    <property type="match status" value="1"/>
</dbReference>
<dbReference type="PANTHER" id="PTHR12899">
    <property type="entry name" value="39S RIBOSOMAL PROTEIN L18, MITOCHONDRIAL"/>
    <property type="match status" value="1"/>
</dbReference>
<dbReference type="PANTHER" id="PTHR12899:SF3">
    <property type="entry name" value="LARGE RIBOSOMAL SUBUNIT PROTEIN UL18M"/>
    <property type="match status" value="1"/>
</dbReference>
<dbReference type="Pfam" id="PF00861">
    <property type="entry name" value="Ribosomal_L18p"/>
    <property type="match status" value="1"/>
</dbReference>
<dbReference type="SUPFAM" id="SSF53137">
    <property type="entry name" value="Translational machinery components"/>
    <property type="match status" value="1"/>
</dbReference>
<gene>
    <name evidence="1" type="primary">rplR</name>
    <name type="ordered locus">BMEA_A1262</name>
</gene>
<feature type="chain" id="PRO_1000166212" description="Large ribosomal subunit protein uL18">
    <location>
        <begin position="1"/>
        <end position="120"/>
    </location>
</feature>
<evidence type="ECO:0000255" key="1">
    <source>
        <dbReference type="HAMAP-Rule" id="MF_01337"/>
    </source>
</evidence>
<evidence type="ECO:0000305" key="2"/>
<name>RL18_BRUMB</name>
<proteinExistence type="inferred from homology"/>